<proteinExistence type="evidence at protein level"/>
<protein>
    <recommendedName>
        <fullName evidence="9">CDP-diacylglycerol--glycerol-3-phosphate 3-phosphatidyltransferase 1, chloroplastic/mitochondrial</fullName>
        <ecNumber evidence="3">2.7.8.5</ecNumber>
    </recommendedName>
    <alternativeName>
        <fullName evidence="9">Phosphatidylglycerophosphate synthase 1</fullName>
        <shortName evidence="9 11">PGP synthase 1</shortName>
    </alternativeName>
    <alternativeName>
        <fullName evidence="11">Protein JOVTENKY</fullName>
    </alternativeName>
</protein>
<sequence>MLRSGLASLIVDVNLRRTLRPSPTFSFPAHLSRCIITSRYSSRTSLRFPIQISRHQHRLSYFSSSSSSEQSRPTSSSRNSFSGHGQLDSDDNSSPPPSQSSSKVLTLPTVLTLGRVAAVPLLVATFYVDSWWGTTATTSIFIAAAITDWLDGYLARKMRLGSAFGAFLDPVADKLMVAATLILLCTKPIQVAELGPLPWLLTVPSIAIIGREITMSAVREWAASQNGKLLEAVAVNNLGKWKTATQMTALTILLASRDSNVGWLVASGAGLLYVSAGLSVWSLAVYMRKIWKVLMK</sequence>
<reference key="1">
    <citation type="journal article" date="2002" name="Plant Physiol.">
        <title>The pgp1 mutant locus of Arabidopsis encodes a phosphatidylglycerolphosphate synthase with impaired activity.</title>
        <authorList>
            <person name="Xu C."/>
            <person name="Hartel H."/>
            <person name="Wada H."/>
            <person name="Hagio M."/>
            <person name="Yu B."/>
            <person name="Eakin C."/>
            <person name="Benning C."/>
        </authorList>
    </citation>
    <scope>NUCLEOTIDE SEQUENCE [MRNA]</scope>
    <scope>FUNCTION</scope>
    <scope>MUTAGENESIS OF PRO-170</scope>
    <scope>DISRUPTION PHENOTYPE</scope>
</reference>
<reference key="2">
    <citation type="journal article" date="1999" name="Nature">
        <title>Sequence and analysis of chromosome 2 of the plant Arabidopsis thaliana.</title>
        <authorList>
            <person name="Lin X."/>
            <person name="Kaul S."/>
            <person name="Rounsley S.D."/>
            <person name="Shea T.P."/>
            <person name="Benito M.-I."/>
            <person name="Town C.D."/>
            <person name="Fujii C.Y."/>
            <person name="Mason T.M."/>
            <person name="Bowman C.L."/>
            <person name="Barnstead M.E."/>
            <person name="Feldblyum T.V."/>
            <person name="Buell C.R."/>
            <person name="Ketchum K.A."/>
            <person name="Lee J.J."/>
            <person name="Ronning C.M."/>
            <person name="Koo H.L."/>
            <person name="Moffat K.S."/>
            <person name="Cronin L.A."/>
            <person name="Shen M."/>
            <person name="Pai G."/>
            <person name="Van Aken S."/>
            <person name="Umayam L."/>
            <person name="Tallon L.J."/>
            <person name="Gill J.E."/>
            <person name="Adams M.D."/>
            <person name="Carrera A.J."/>
            <person name="Creasy T.H."/>
            <person name="Goodman H.M."/>
            <person name="Somerville C.R."/>
            <person name="Copenhaver G.P."/>
            <person name="Preuss D."/>
            <person name="Nierman W.C."/>
            <person name="White O."/>
            <person name="Eisen J.A."/>
            <person name="Salzberg S.L."/>
            <person name="Fraser C.M."/>
            <person name="Venter J.C."/>
        </authorList>
    </citation>
    <scope>NUCLEOTIDE SEQUENCE [LARGE SCALE GENOMIC DNA]</scope>
    <source>
        <strain>cv. Columbia</strain>
    </source>
</reference>
<reference key="3">
    <citation type="journal article" date="2017" name="Plant J.">
        <title>Araport11: a complete reannotation of the Arabidopsis thaliana reference genome.</title>
        <authorList>
            <person name="Cheng C.Y."/>
            <person name="Krishnakumar V."/>
            <person name="Chan A.P."/>
            <person name="Thibaud-Nissen F."/>
            <person name="Schobel S."/>
            <person name="Town C.D."/>
        </authorList>
    </citation>
    <scope>GENOME REANNOTATION</scope>
    <source>
        <strain>cv. Columbia</strain>
    </source>
</reference>
<reference key="4">
    <citation type="submission" date="2004-09" db="EMBL/GenBank/DDBJ databases">
        <title>Large-scale analysis of RIKEN Arabidopsis full-length (RAFL) cDNAs.</title>
        <authorList>
            <person name="Totoki Y."/>
            <person name="Seki M."/>
            <person name="Ishida J."/>
            <person name="Nakajima M."/>
            <person name="Enju A."/>
            <person name="Kamiya A."/>
            <person name="Narusaka M."/>
            <person name="Shin-i T."/>
            <person name="Nakagawa M."/>
            <person name="Sakamoto N."/>
            <person name="Oishi K."/>
            <person name="Kohara Y."/>
            <person name="Kobayashi M."/>
            <person name="Toyoda A."/>
            <person name="Sakaki Y."/>
            <person name="Sakurai T."/>
            <person name="Iida K."/>
            <person name="Akiyama K."/>
            <person name="Satou M."/>
            <person name="Toyoda T."/>
            <person name="Konagaya A."/>
            <person name="Carninci P."/>
            <person name="Kawai J."/>
            <person name="Hayashizaki Y."/>
            <person name="Shinozaki K."/>
        </authorList>
    </citation>
    <scope>NUCLEOTIDE SEQUENCE [LARGE SCALE MRNA]</scope>
    <source>
        <strain>cv. Columbia</strain>
    </source>
</reference>
<reference key="5">
    <citation type="submission" date="2006-03" db="EMBL/GenBank/DDBJ databases">
        <title>Arabidopsis ORF clones.</title>
        <authorList>
            <person name="Kim C.J."/>
            <person name="Chen H."/>
            <person name="Shinn P."/>
            <person name="Ecker J.R."/>
        </authorList>
    </citation>
    <scope>NUCLEOTIDE SEQUENCE [LARGE SCALE MRNA]</scope>
    <source>
        <strain>cv. Columbia</strain>
    </source>
</reference>
<reference key="6">
    <citation type="journal article" date="2001" name="FEBS Lett.">
        <title>Phosphatidylglycerophosphate synthases from Arabidopsis thaliana.</title>
        <authorList>
            <person name="Muller F."/>
            <person name="Frentzen M."/>
        </authorList>
    </citation>
    <scope>FUNCTION</scope>
    <scope>CATALYTIC ACTIVITY</scope>
    <scope>COFACTOR</scope>
    <scope>BIOPHYSICOCHEMICAL PROPERTIES</scope>
    <scope>SUBCELLULAR LOCATION</scope>
</reference>
<reference key="7">
    <citation type="journal article" date="2003" name="Plant J.">
        <title>Arabidopsis phosphatidylglycerophosphate synthase 1 is essential for chloroplast differentiation, but is dispensable for mitochondrial function.</title>
        <authorList>
            <person name="Babiychuk E."/>
            <person name="Mueller F."/>
            <person name="Eubel H."/>
            <person name="Braun H.-P."/>
            <person name="Frentzen M."/>
            <person name="Kushnir S."/>
        </authorList>
    </citation>
    <scope>FUNCTION</scope>
    <scope>DISRUPTION PHENOTYPE</scope>
    <scope>SUBCELLULAR LOCATION</scope>
    <source>
        <strain>cv. C24</strain>
    </source>
</reference>
<reference key="8">
    <citation type="journal article" date="2014" name="FEBS Lett.">
        <title>Phosphatidylglycerol biosynthesis is required for the development of embryos and normal membrane structures of chloroplasts and mitochondria in Arabidopsis.</title>
        <authorList>
            <person name="Tanoue R."/>
            <person name="Kobayashi M."/>
            <person name="Katayama K."/>
            <person name="Nagata N."/>
            <person name="Wada H."/>
        </authorList>
    </citation>
    <scope>FUNCTION</scope>
    <scope>DISRUPTION PHENOTYPE</scope>
    <source>
        <strain>cv. Columbia</strain>
    </source>
</reference>
<reference key="9">
    <citation type="journal article" date="2016" name="Front. Plant Sci.">
        <title>Multiple Impacts of Loss of Plastidic Phosphatidylglycerol Biosynthesis on Photosynthesis during Seedling Growth of Arabidopsis.</title>
        <authorList>
            <person name="Kobayashi K."/>
            <person name="Endo K."/>
            <person name="Wada H."/>
        </authorList>
    </citation>
    <scope>FUNCTION</scope>
    <scope>DISRUPTION PHENOTYPE</scope>
    <source>
        <strain>cv. Columbia</strain>
    </source>
</reference>
<reference key="10">
    <citation type="journal article" date="2022" name="Planta">
        <title>The decreased PG content of pgp1 inhibits PSI photochemistry and limits reaction center and light-harvesting polypeptide accumulation in response to cold acclimation.</title>
        <authorList>
            <person name="Ivanov A.G."/>
            <person name="Krol M."/>
            <person name="Savitch L.V."/>
            <person name="Szyszka-Mroz B."/>
            <person name="Roche J."/>
            <person name="Sprott D.P."/>
            <person name="Selstam E."/>
            <person name="Wilson K.W."/>
            <person name="Gardiner R."/>
            <person name="Oequist G."/>
            <person name="Hurry V.M."/>
            <person name="Huener N.P.A."/>
        </authorList>
    </citation>
    <scope>FUNCTION</scope>
    <scope>DISRUPTION PHENOTYPE</scope>
    <source>
        <strain>cv. Col-2</strain>
        <strain>cv. Columbia</strain>
    </source>
</reference>
<comment type="function">
    <text evidence="3 4 5 6 7 8">Catalyzes the committed step to the synthesis of the acidic phospholipids, including phosphatidylglycerol (PG) (PubMed:12609031, PubMed:24632290). Transfers specifically a phosphatidyl group from CDP-diacylglycerol to glycerol-3-phosphate to form phosphatidylglycerophosphate. Cannot catalyze the phosphatidyl group transfer to inositol, serine, choline or phosphatidylglycerol. Possesses high activity with CDP-dipalmitoylglycerol and low activity with CDP-dioleoylglycerol. Essential for chloroplast differentiation and PG accumulation in thylakoids, an essential process for the assembly of antenna-reaction center complexes to optimize energy transfer from antenna pigments, and for subsequent photochemical efficiency of photosystem II (PSII) (PubMed:12609031, PubMed:27047516). During cold acclimation (at 5 degrees Celsius), necessary for the photosystem I (PSI) photochemistry, including both reaction center and light-harvesting integrity (PubMed:35015152). But dispensable in mitochondrion, being redundant with PGPS2 for the production of PG and its derivative cardiolipin (CL) in mitochondrial membranes (PubMed:12609031). Together with PGPS2, required for the proper embryo development by providing PG accurate levels (PubMed:24632290).</text>
</comment>
<comment type="catalytic activity">
    <reaction evidence="3">
        <text>a CDP-1,2-diacyl-sn-glycerol + sn-glycerol 3-phosphate = a 1,2-diacyl-sn-glycero-3-phospho-(1'-sn-glycero-3'-phosphate) + CMP + H(+)</text>
        <dbReference type="Rhea" id="RHEA:12593"/>
        <dbReference type="ChEBI" id="CHEBI:15378"/>
        <dbReference type="ChEBI" id="CHEBI:57597"/>
        <dbReference type="ChEBI" id="CHEBI:58332"/>
        <dbReference type="ChEBI" id="CHEBI:60110"/>
        <dbReference type="ChEBI" id="CHEBI:60377"/>
        <dbReference type="EC" id="2.7.8.5"/>
    </reaction>
</comment>
<comment type="cofactor">
    <cofactor evidence="3">
        <name>Mn(2+)</name>
        <dbReference type="ChEBI" id="CHEBI:29035"/>
    </cofactor>
</comment>
<comment type="biophysicochemical properties">
    <kinetics>
        <KM evidence="3">52 uM for glycerol-3-phosphate</KM>
        <KM evidence="3">12 uM for CDP-dipalmitoylglycerol</KM>
    </kinetics>
    <phDependence>
        <text evidence="3">Optimum pH is 8.5.</text>
    </phDependence>
</comment>
<comment type="pathway">
    <text>Phospholipid metabolism; phosphatidylglycerol biosynthesis; phosphatidylglycerol from CDP-diacylglycerol: step 1/2.</text>
</comment>
<comment type="subcellular location">
    <subcellularLocation>
        <location evidence="5">Plastid</location>
        <location evidence="5">Chloroplast membrane</location>
        <topology evidence="1">Multi-pass membrane protein</topology>
    </subcellularLocation>
    <subcellularLocation>
        <location evidence="5 13">Mitochondrion membrane</location>
        <topology evidence="1">Multi-pass membrane protein</topology>
    </subcellularLocation>
</comment>
<comment type="disruption phenotype">
    <text evidence="4 5 6 7 8">Pale green stunted early flowering plants, especially at low ambient temperatures, with impaired photosynthesis and abnormal thylakoid membranes in chloroplasts; requires exogenous sugars for growth (PubMed:12068104, PubMed:12609031, PubMed:24632290, PubMed:27047516). Strongly reduced photochemical efficiency of photosystem II (PSII) due to impaired energy transfer from antenna pigments to the PSII reaction center (PubMed:27047516). Enhanced PSII complexes susceptibility to photodamage by red light irradiation, associated with manganese ions Mg(2+) dissociation leading to reduced oxygen-evolving activity (PubMed:27047516). During cold acclimation (at 5 degrees Celsius), impaired photosystem I (PSI) photochemistry due to reduced light-harvesting- and reaction center-related genes expression (e.g. Lhcas and Lhcbs) and proteins assembly, thus leading to a reversible yellow phenotype and altered choloroplast ultrastructure (PubMed:35015152). The pgp1 pgp2 double mutants have delayed embryonic development and produce sterile seeds, their plastids lack thylakoid membranes and their mitochondria show abnormal membrane structures; these phenotypes are associated with deficient phosphatidylglycerol (PG) biosynthesis (PubMed:24632290).</text>
</comment>
<comment type="miscellaneous">
    <text evidence="14">'Jovtenky' means yellow in Ukrainian.</text>
</comment>
<comment type="similarity">
    <text evidence="12">Belongs to the CDP-alcohol phosphatidyltransferase class-I family.</text>
</comment>
<organism>
    <name type="scientific">Arabidopsis thaliana</name>
    <name type="common">Mouse-ear cress</name>
    <dbReference type="NCBI Taxonomy" id="3702"/>
    <lineage>
        <taxon>Eukaryota</taxon>
        <taxon>Viridiplantae</taxon>
        <taxon>Streptophyta</taxon>
        <taxon>Embryophyta</taxon>
        <taxon>Tracheophyta</taxon>
        <taxon>Spermatophyta</taxon>
        <taxon>Magnoliopsida</taxon>
        <taxon>eudicotyledons</taxon>
        <taxon>Gunneridae</taxon>
        <taxon>Pentapetalae</taxon>
        <taxon>rosids</taxon>
        <taxon>malvids</taxon>
        <taxon>Brassicales</taxon>
        <taxon>Brassicaceae</taxon>
        <taxon>Camelineae</taxon>
        <taxon>Arabidopsis</taxon>
    </lineage>
</organism>
<feature type="transit peptide" description="Chloroplast and mitochondrion" evidence="1">
    <location>
        <begin position="1"/>
        <end position="39"/>
    </location>
</feature>
<feature type="chain" id="PRO_0000429135" description="CDP-diacylglycerol--glycerol-3-phosphate 3-phosphatidyltransferase 1, chloroplastic/mitochondrial">
    <location>
        <begin position="40"/>
        <end position="296"/>
    </location>
</feature>
<feature type="transmembrane region" description="Helical" evidence="1">
    <location>
        <begin position="104"/>
        <end position="124"/>
    </location>
</feature>
<feature type="transmembrane region" description="Helical" evidence="1">
    <location>
        <begin position="126"/>
        <end position="146"/>
    </location>
</feature>
<feature type="transmembrane region" description="Helical" evidence="1">
    <location>
        <begin position="164"/>
        <end position="184"/>
    </location>
</feature>
<feature type="transmembrane region" description="Helical" evidence="1">
    <location>
        <begin position="189"/>
        <end position="209"/>
    </location>
</feature>
<feature type="transmembrane region" description="Helical" evidence="1">
    <location>
        <begin position="261"/>
        <end position="281"/>
    </location>
</feature>
<feature type="region of interest" description="Disordered" evidence="2">
    <location>
        <begin position="62"/>
        <end position="103"/>
    </location>
</feature>
<feature type="compositionally biased region" description="Low complexity" evidence="2">
    <location>
        <begin position="62"/>
        <end position="82"/>
    </location>
</feature>
<feature type="mutagenesis site" description="In pgp1; reduces activity 5-fold." evidence="4">
    <original>P</original>
    <variation>S</variation>
    <location>
        <position position="170"/>
    </location>
</feature>
<feature type="sequence conflict" description="In Ref. 4; BAD43832." evidence="12" ref="4">
    <original>A</original>
    <variation>V</variation>
    <location>
        <position position="276"/>
    </location>
</feature>
<keyword id="KW-0150">Chloroplast</keyword>
<keyword id="KW-0444">Lipid biosynthesis</keyword>
<keyword id="KW-0443">Lipid metabolism</keyword>
<keyword id="KW-0472">Membrane</keyword>
<keyword id="KW-0496">Mitochondrion</keyword>
<keyword id="KW-0594">Phospholipid biosynthesis</keyword>
<keyword id="KW-1208">Phospholipid metabolism</keyword>
<keyword id="KW-0934">Plastid</keyword>
<keyword id="KW-1185">Reference proteome</keyword>
<keyword id="KW-0808">Transferase</keyword>
<keyword id="KW-0809">Transit peptide</keyword>
<keyword id="KW-0812">Transmembrane</keyword>
<keyword id="KW-1133">Transmembrane helix</keyword>
<name>PGPS1_ARATH</name>
<accession>O80952</accession>
<accession>Q67ZP8</accession>
<dbReference type="EC" id="2.7.8.5" evidence="3"/>
<dbReference type="EMBL" id="AB048535">
    <property type="protein sequence ID" value="BAB39133.1"/>
    <property type="molecule type" value="mRNA"/>
</dbReference>
<dbReference type="EMBL" id="AB058617">
    <property type="protein sequence ID" value="BAB68508.1"/>
    <property type="molecule type" value="mRNA"/>
</dbReference>
<dbReference type="EMBL" id="AC004697">
    <property type="protein sequence ID" value="AAC28995.1"/>
    <property type="molecule type" value="Genomic_DNA"/>
</dbReference>
<dbReference type="EMBL" id="CP002685">
    <property type="protein sequence ID" value="AEC09655.1"/>
    <property type="molecule type" value="Genomic_DNA"/>
</dbReference>
<dbReference type="EMBL" id="AK176069">
    <property type="protein sequence ID" value="BAD43832.1"/>
    <property type="molecule type" value="mRNA"/>
</dbReference>
<dbReference type="EMBL" id="BT024857">
    <property type="protein sequence ID" value="ABD65588.1"/>
    <property type="molecule type" value="mRNA"/>
</dbReference>
<dbReference type="PIR" id="T02573">
    <property type="entry name" value="T02573"/>
</dbReference>
<dbReference type="RefSeq" id="NP_181461.1">
    <property type="nucleotide sequence ID" value="NM_129486.5"/>
</dbReference>
<dbReference type="SMR" id="O80952"/>
<dbReference type="BioGRID" id="3852">
    <property type="interactions" value="11"/>
</dbReference>
<dbReference type="FunCoup" id="O80952">
    <property type="interactions" value="163"/>
</dbReference>
<dbReference type="IntAct" id="O80952">
    <property type="interactions" value="11"/>
</dbReference>
<dbReference type="STRING" id="3702.O80952"/>
<dbReference type="PaxDb" id="3702-AT2G39290.1"/>
<dbReference type="ProteomicsDB" id="234901"/>
<dbReference type="EnsemblPlants" id="AT2G39290.1">
    <property type="protein sequence ID" value="AT2G39290.1"/>
    <property type="gene ID" value="AT2G39290"/>
</dbReference>
<dbReference type="GeneID" id="818514"/>
<dbReference type="Gramene" id="AT2G39290.1">
    <property type="protein sequence ID" value="AT2G39290.1"/>
    <property type="gene ID" value="AT2G39290"/>
</dbReference>
<dbReference type="KEGG" id="ath:AT2G39290"/>
<dbReference type="Araport" id="AT2G39290"/>
<dbReference type="TAIR" id="AT2G39290">
    <property type="gene designation" value="PGP1"/>
</dbReference>
<dbReference type="eggNOG" id="KOG1617">
    <property type="taxonomic scope" value="Eukaryota"/>
</dbReference>
<dbReference type="HOGENOM" id="CLU_051314_2_1_1"/>
<dbReference type="InParanoid" id="O80952"/>
<dbReference type="OMA" id="ATRDWSH"/>
<dbReference type="OrthoDB" id="10020554at2759"/>
<dbReference type="PhylomeDB" id="O80952"/>
<dbReference type="BioCyc" id="MetaCyc:AT2G39290-MONOMER"/>
<dbReference type="SABIO-RK" id="O80952"/>
<dbReference type="UniPathway" id="UPA00084">
    <property type="reaction ID" value="UER00503"/>
</dbReference>
<dbReference type="PRO" id="PR:O80952"/>
<dbReference type="Proteomes" id="UP000006548">
    <property type="component" value="Chromosome 2"/>
</dbReference>
<dbReference type="ExpressionAtlas" id="O80952">
    <property type="expression patterns" value="baseline and differential"/>
</dbReference>
<dbReference type="GO" id="GO:0009507">
    <property type="term" value="C:chloroplast"/>
    <property type="evidence" value="ECO:0000314"/>
    <property type="project" value="TAIR"/>
</dbReference>
<dbReference type="GO" id="GO:0009941">
    <property type="term" value="C:chloroplast envelope"/>
    <property type="evidence" value="ECO:0007005"/>
    <property type="project" value="TAIR"/>
</dbReference>
<dbReference type="GO" id="GO:0031969">
    <property type="term" value="C:chloroplast membrane"/>
    <property type="evidence" value="ECO:0007669"/>
    <property type="project" value="UniProtKB-SubCell"/>
</dbReference>
<dbReference type="GO" id="GO:0005794">
    <property type="term" value="C:Golgi apparatus"/>
    <property type="evidence" value="ECO:0007005"/>
    <property type="project" value="TAIR"/>
</dbReference>
<dbReference type="GO" id="GO:0031966">
    <property type="term" value="C:mitochondrial membrane"/>
    <property type="evidence" value="ECO:0007669"/>
    <property type="project" value="UniProtKB-SubCell"/>
</dbReference>
<dbReference type="GO" id="GO:0005739">
    <property type="term" value="C:mitochondrion"/>
    <property type="evidence" value="ECO:0000314"/>
    <property type="project" value="TAIR"/>
</dbReference>
<dbReference type="GO" id="GO:0008444">
    <property type="term" value="F:CDP-diacylglycerol-glycerol-3-phosphate 3-phosphatidyltransferase activity"/>
    <property type="evidence" value="ECO:0000314"/>
    <property type="project" value="TAIR"/>
</dbReference>
<dbReference type="GO" id="GO:0030145">
    <property type="term" value="F:manganese ion binding"/>
    <property type="evidence" value="ECO:0000314"/>
    <property type="project" value="UniProtKB"/>
</dbReference>
<dbReference type="GO" id="GO:0009658">
    <property type="term" value="P:chloroplast organization"/>
    <property type="evidence" value="ECO:0000315"/>
    <property type="project" value="UniProtKB"/>
</dbReference>
<dbReference type="GO" id="GO:0006655">
    <property type="term" value="P:phosphatidylglycerol biosynthetic process"/>
    <property type="evidence" value="ECO:0000315"/>
    <property type="project" value="UniProtKB"/>
</dbReference>
<dbReference type="GO" id="GO:0008654">
    <property type="term" value="P:phospholipid biosynthetic process"/>
    <property type="evidence" value="ECO:0000314"/>
    <property type="project" value="TAIR"/>
</dbReference>
<dbReference type="GO" id="GO:0009772">
    <property type="term" value="P:photosynthetic electron transport in photosystem II"/>
    <property type="evidence" value="ECO:0000315"/>
    <property type="project" value="UniProtKB"/>
</dbReference>
<dbReference type="GO" id="GO:0045995">
    <property type="term" value="P:regulation of embryonic development"/>
    <property type="evidence" value="ECO:0000315"/>
    <property type="project" value="UniProtKB"/>
</dbReference>
<dbReference type="GO" id="GO:0010027">
    <property type="term" value="P:thylakoid membrane organization"/>
    <property type="evidence" value="ECO:0000315"/>
    <property type="project" value="UniProtKB"/>
</dbReference>
<dbReference type="FunFam" id="1.20.120.1760:FF:000008">
    <property type="entry name" value="CDP-diacylglycerol--glycerol-3-phosphate 3-phosphatidyltransferase 2"/>
    <property type="match status" value="1"/>
</dbReference>
<dbReference type="Gene3D" id="1.20.120.1760">
    <property type="match status" value="1"/>
</dbReference>
<dbReference type="InterPro" id="IPR050324">
    <property type="entry name" value="CDP-alcohol_PTase-I"/>
</dbReference>
<dbReference type="InterPro" id="IPR000462">
    <property type="entry name" value="CDP-OH_P_trans"/>
</dbReference>
<dbReference type="InterPro" id="IPR043130">
    <property type="entry name" value="CDP-OH_PTrfase_TM_dom"/>
</dbReference>
<dbReference type="InterPro" id="IPR048254">
    <property type="entry name" value="CDP_ALCOHOL_P_TRANSF_CS"/>
</dbReference>
<dbReference type="InterPro" id="IPR004570">
    <property type="entry name" value="Phosphatidylglycerol_P_synth"/>
</dbReference>
<dbReference type="NCBIfam" id="TIGR00560">
    <property type="entry name" value="pgsA"/>
    <property type="match status" value="1"/>
</dbReference>
<dbReference type="PANTHER" id="PTHR14269:SF62">
    <property type="entry name" value="CDP-DIACYLGLYCEROL--GLYCEROL-3-PHOSPHATE 3-PHOSPHATIDYLTRANSFERASE 1, CHLOROPLASTIC"/>
    <property type="match status" value="1"/>
</dbReference>
<dbReference type="PANTHER" id="PTHR14269">
    <property type="entry name" value="CDP-DIACYLGLYCEROL--GLYCEROL-3-PHOSPHATE 3-PHOSPHATIDYLTRANSFERASE-RELATED"/>
    <property type="match status" value="1"/>
</dbReference>
<dbReference type="Pfam" id="PF01066">
    <property type="entry name" value="CDP-OH_P_transf"/>
    <property type="match status" value="1"/>
</dbReference>
<dbReference type="PROSITE" id="PS00379">
    <property type="entry name" value="CDP_ALCOHOL_P_TRANSF"/>
    <property type="match status" value="1"/>
</dbReference>
<gene>
    <name evidence="9" type="primary">PGPS1</name>
    <name evidence="11" type="synonym">JOV</name>
    <name evidence="10 11" type="synonym">PGP1</name>
    <name evidence="9" type="synonym">PGS1</name>
    <name evidence="15" type="ordered locus">At2g39290</name>
    <name evidence="16" type="ORF">T16B24.7</name>
</gene>
<evidence type="ECO:0000255" key="1"/>
<evidence type="ECO:0000256" key="2">
    <source>
        <dbReference type="SAM" id="MobiDB-lite"/>
    </source>
</evidence>
<evidence type="ECO:0000269" key="3">
    <source>
    </source>
</evidence>
<evidence type="ECO:0000269" key="4">
    <source>
    </source>
</evidence>
<evidence type="ECO:0000269" key="5">
    <source>
    </source>
</evidence>
<evidence type="ECO:0000269" key="6">
    <source>
    </source>
</evidence>
<evidence type="ECO:0000269" key="7">
    <source>
    </source>
</evidence>
<evidence type="ECO:0000269" key="8">
    <source>
    </source>
</evidence>
<evidence type="ECO:0000303" key="9">
    <source>
    </source>
</evidence>
<evidence type="ECO:0000303" key="10">
    <source>
    </source>
</evidence>
<evidence type="ECO:0000303" key="11">
    <source>
    </source>
</evidence>
<evidence type="ECO:0000305" key="12"/>
<evidence type="ECO:0000305" key="13">
    <source>
    </source>
</evidence>
<evidence type="ECO:0000305" key="14">
    <source>
    </source>
</evidence>
<evidence type="ECO:0000312" key="15">
    <source>
        <dbReference type="Araport" id="AT2G39290"/>
    </source>
</evidence>
<evidence type="ECO:0000312" key="16">
    <source>
        <dbReference type="EMBL" id="AAC28995.1"/>
    </source>
</evidence>